<accession>A5UG91</accession>
<reference key="1">
    <citation type="journal article" date="2007" name="Genome Biol.">
        <title>Characterization and modeling of the Haemophilus influenzae core and supragenomes based on the complete genomic sequences of Rd and 12 clinical nontypeable strains.</title>
        <authorList>
            <person name="Hogg J.S."/>
            <person name="Hu F.Z."/>
            <person name="Janto B."/>
            <person name="Boissy R."/>
            <person name="Hayes J."/>
            <person name="Keefe R."/>
            <person name="Post J.C."/>
            <person name="Ehrlich G.D."/>
        </authorList>
    </citation>
    <scope>NUCLEOTIDE SEQUENCE [LARGE SCALE GENOMIC DNA]</scope>
    <source>
        <strain>PittGG</strain>
    </source>
</reference>
<sequence>MRPNNRENNQPRQIKITRNYTKHAEGSVLVEFGDTKVLCTATVEDAVPRFLKGQGQGWVTAEYGMLPRSTHSRMQREAAKGKQSGRTMEIQRLIARSLRAMVDLKALGERAITLDCDVIQADGGTRTASITGAAVALCDAINSLIENGTLKTNPIKGLVSAISVGIVEGQAVCDLEYVEDSAAETDMNVVMMEDGRMIEVQGTAEGEPFSHEELLTLLDLAKQGCNQIFIAQRKVLGL</sequence>
<organism>
    <name type="scientific">Haemophilus influenzae (strain PittGG)</name>
    <dbReference type="NCBI Taxonomy" id="374931"/>
    <lineage>
        <taxon>Bacteria</taxon>
        <taxon>Pseudomonadati</taxon>
        <taxon>Pseudomonadota</taxon>
        <taxon>Gammaproteobacteria</taxon>
        <taxon>Pasteurellales</taxon>
        <taxon>Pasteurellaceae</taxon>
        <taxon>Haemophilus</taxon>
    </lineage>
</organism>
<comment type="function">
    <text evidence="1">Phosphorolytic 3'-5' exoribonuclease that plays an important role in tRNA 3'-end maturation. Removes nucleotide residues following the 3'-CCA terminus of tRNAs; can also add nucleotides to the ends of RNA molecules by using nucleoside diphosphates as substrates, but this may not be physiologically important. Probably plays a role in initiation of 16S rRNA degradation (leading to ribosome degradation) during starvation.</text>
</comment>
<comment type="catalytic activity">
    <reaction evidence="1">
        <text>tRNA(n+1) + phosphate = tRNA(n) + a ribonucleoside 5'-diphosphate</text>
        <dbReference type="Rhea" id="RHEA:10628"/>
        <dbReference type="Rhea" id="RHEA-COMP:17343"/>
        <dbReference type="Rhea" id="RHEA-COMP:17344"/>
        <dbReference type="ChEBI" id="CHEBI:43474"/>
        <dbReference type="ChEBI" id="CHEBI:57930"/>
        <dbReference type="ChEBI" id="CHEBI:173114"/>
        <dbReference type="EC" id="2.7.7.56"/>
    </reaction>
</comment>
<comment type="subunit">
    <text evidence="1">Homohexameric ring arranged as a trimer of dimers.</text>
</comment>
<comment type="similarity">
    <text evidence="1">Belongs to the RNase PH family.</text>
</comment>
<keyword id="KW-0548">Nucleotidyltransferase</keyword>
<keyword id="KW-0694">RNA-binding</keyword>
<keyword id="KW-0698">rRNA processing</keyword>
<keyword id="KW-0808">Transferase</keyword>
<keyword id="KW-0819">tRNA processing</keyword>
<keyword id="KW-0820">tRNA-binding</keyword>
<feature type="chain" id="PRO_1000024816" description="Ribonuclease PH">
    <location>
        <begin position="1"/>
        <end position="238"/>
    </location>
</feature>
<feature type="binding site" evidence="1">
    <location>
        <position position="86"/>
    </location>
    <ligand>
        <name>phosphate</name>
        <dbReference type="ChEBI" id="CHEBI:43474"/>
        <note>substrate</note>
    </ligand>
</feature>
<feature type="binding site" evidence="1">
    <location>
        <begin position="124"/>
        <end position="126"/>
    </location>
    <ligand>
        <name>phosphate</name>
        <dbReference type="ChEBI" id="CHEBI:43474"/>
        <note>substrate</note>
    </ligand>
</feature>
<evidence type="ECO:0000255" key="1">
    <source>
        <dbReference type="HAMAP-Rule" id="MF_00564"/>
    </source>
</evidence>
<dbReference type="EC" id="2.7.7.56" evidence="1"/>
<dbReference type="EMBL" id="CP000672">
    <property type="protein sequence ID" value="ABQ99796.1"/>
    <property type="molecule type" value="Genomic_DNA"/>
</dbReference>
<dbReference type="SMR" id="A5UG91"/>
<dbReference type="KEGG" id="hiq:CGSHiGG_04165"/>
<dbReference type="HOGENOM" id="CLU_050858_0_0_6"/>
<dbReference type="Proteomes" id="UP000001990">
    <property type="component" value="Chromosome"/>
</dbReference>
<dbReference type="GO" id="GO:0000175">
    <property type="term" value="F:3'-5'-RNA exonuclease activity"/>
    <property type="evidence" value="ECO:0007669"/>
    <property type="project" value="UniProtKB-UniRule"/>
</dbReference>
<dbReference type="GO" id="GO:0000049">
    <property type="term" value="F:tRNA binding"/>
    <property type="evidence" value="ECO:0007669"/>
    <property type="project" value="UniProtKB-UniRule"/>
</dbReference>
<dbReference type="GO" id="GO:0009022">
    <property type="term" value="F:tRNA nucleotidyltransferase activity"/>
    <property type="evidence" value="ECO:0007669"/>
    <property type="project" value="UniProtKB-UniRule"/>
</dbReference>
<dbReference type="GO" id="GO:0016075">
    <property type="term" value="P:rRNA catabolic process"/>
    <property type="evidence" value="ECO:0007669"/>
    <property type="project" value="UniProtKB-UniRule"/>
</dbReference>
<dbReference type="GO" id="GO:0006364">
    <property type="term" value="P:rRNA processing"/>
    <property type="evidence" value="ECO:0007669"/>
    <property type="project" value="UniProtKB-KW"/>
</dbReference>
<dbReference type="GO" id="GO:0008033">
    <property type="term" value="P:tRNA processing"/>
    <property type="evidence" value="ECO:0007669"/>
    <property type="project" value="UniProtKB-UniRule"/>
</dbReference>
<dbReference type="CDD" id="cd11362">
    <property type="entry name" value="RNase_PH_bact"/>
    <property type="match status" value="1"/>
</dbReference>
<dbReference type="FunFam" id="3.30.230.70:FF:000003">
    <property type="entry name" value="Ribonuclease PH"/>
    <property type="match status" value="1"/>
</dbReference>
<dbReference type="Gene3D" id="3.30.230.70">
    <property type="entry name" value="GHMP Kinase, N-terminal domain"/>
    <property type="match status" value="1"/>
</dbReference>
<dbReference type="HAMAP" id="MF_00564">
    <property type="entry name" value="RNase_PH"/>
    <property type="match status" value="1"/>
</dbReference>
<dbReference type="InterPro" id="IPR001247">
    <property type="entry name" value="ExoRNase_PH_dom1"/>
</dbReference>
<dbReference type="InterPro" id="IPR015847">
    <property type="entry name" value="ExoRNase_PH_dom2"/>
</dbReference>
<dbReference type="InterPro" id="IPR036345">
    <property type="entry name" value="ExoRNase_PH_dom2_sf"/>
</dbReference>
<dbReference type="InterPro" id="IPR027408">
    <property type="entry name" value="PNPase/RNase_PH_dom_sf"/>
</dbReference>
<dbReference type="InterPro" id="IPR020568">
    <property type="entry name" value="Ribosomal_Su5_D2-typ_SF"/>
</dbReference>
<dbReference type="InterPro" id="IPR050080">
    <property type="entry name" value="RNase_PH"/>
</dbReference>
<dbReference type="InterPro" id="IPR002381">
    <property type="entry name" value="RNase_PH_bac-type"/>
</dbReference>
<dbReference type="InterPro" id="IPR018336">
    <property type="entry name" value="RNase_PH_CS"/>
</dbReference>
<dbReference type="NCBIfam" id="TIGR01966">
    <property type="entry name" value="RNasePH"/>
    <property type="match status" value="1"/>
</dbReference>
<dbReference type="PANTHER" id="PTHR11953">
    <property type="entry name" value="EXOSOME COMPLEX COMPONENT"/>
    <property type="match status" value="1"/>
</dbReference>
<dbReference type="PANTHER" id="PTHR11953:SF0">
    <property type="entry name" value="EXOSOME COMPLEX COMPONENT RRP41"/>
    <property type="match status" value="1"/>
</dbReference>
<dbReference type="Pfam" id="PF01138">
    <property type="entry name" value="RNase_PH"/>
    <property type="match status" value="1"/>
</dbReference>
<dbReference type="Pfam" id="PF03725">
    <property type="entry name" value="RNase_PH_C"/>
    <property type="match status" value="1"/>
</dbReference>
<dbReference type="SUPFAM" id="SSF55666">
    <property type="entry name" value="Ribonuclease PH domain 2-like"/>
    <property type="match status" value="1"/>
</dbReference>
<dbReference type="SUPFAM" id="SSF54211">
    <property type="entry name" value="Ribosomal protein S5 domain 2-like"/>
    <property type="match status" value="1"/>
</dbReference>
<dbReference type="PROSITE" id="PS01277">
    <property type="entry name" value="RIBONUCLEASE_PH"/>
    <property type="match status" value="1"/>
</dbReference>
<gene>
    <name evidence="1" type="primary">rph</name>
    <name type="ordered locus">CGSHiGG_04165</name>
</gene>
<proteinExistence type="inferred from homology"/>
<protein>
    <recommendedName>
        <fullName evidence="1">Ribonuclease PH</fullName>
        <shortName evidence="1">RNase PH</shortName>
        <ecNumber evidence="1">2.7.7.56</ecNumber>
    </recommendedName>
    <alternativeName>
        <fullName evidence="1">tRNA nucleotidyltransferase</fullName>
    </alternativeName>
</protein>
<name>RNPH_HAEIG</name>